<keyword id="KW-0687">Ribonucleoprotein</keyword>
<keyword id="KW-0689">Ribosomal protein</keyword>
<keyword id="KW-0694">RNA-binding</keyword>
<keyword id="KW-0699">rRNA-binding</keyword>
<protein>
    <recommendedName>
        <fullName evidence="1">Large ribosomal subunit protein uL4</fullName>
    </recommendedName>
    <alternativeName>
        <fullName evidence="3">50S ribosomal protein L4</fullName>
    </alternativeName>
</protein>
<dbReference type="EMBL" id="CP001074">
    <property type="protein sequence ID" value="ACE90720.1"/>
    <property type="molecule type" value="Genomic_DNA"/>
</dbReference>
<dbReference type="SMR" id="B3PWS2"/>
<dbReference type="KEGG" id="rec:RHECIAT_CH0001750"/>
<dbReference type="eggNOG" id="COG0088">
    <property type="taxonomic scope" value="Bacteria"/>
</dbReference>
<dbReference type="HOGENOM" id="CLU_041575_5_1_5"/>
<dbReference type="Proteomes" id="UP000008817">
    <property type="component" value="Chromosome"/>
</dbReference>
<dbReference type="GO" id="GO:1990904">
    <property type="term" value="C:ribonucleoprotein complex"/>
    <property type="evidence" value="ECO:0007669"/>
    <property type="project" value="UniProtKB-KW"/>
</dbReference>
<dbReference type="GO" id="GO:0005840">
    <property type="term" value="C:ribosome"/>
    <property type="evidence" value="ECO:0007669"/>
    <property type="project" value="UniProtKB-KW"/>
</dbReference>
<dbReference type="GO" id="GO:0019843">
    <property type="term" value="F:rRNA binding"/>
    <property type="evidence" value="ECO:0007669"/>
    <property type="project" value="UniProtKB-UniRule"/>
</dbReference>
<dbReference type="GO" id="GO:0003735">
    <property type="term" value="F:structural constituent of ribosome"/>
    <property type="evidence" value="ECO:0007669"/>
    <property type="project" value="InterPro"/>
</dbReference>
<dbReference type="GO" id="GO:0006412">
    <property type="term" value="P:translation"/>
    <property type="evidence" value="ECO:0007669"/>
    <property type="project" value="UniProtKB-UniRule"/>
</dbReference>
<dbReference type="Gene3D" id="3.40.1370.10">
    <property type="match status" value="1"/>
</dbReference>
<dbReference type="HAMAP" id="MF_01328_B">
    <property type="entry name" value="Ribosomal_uL4_B"/>
    <property type="match status" value="1"/>
</dbReference>
<dbReference type="InterPro" id="IPR002136">
    <property type="entry name" value="Ribosomal_uL4"/>
</dbReference>
<dbReference type="InterPro" id="IPR013005">
    <property type="entry name" value="Ribosomal_uL4-like"/>
</dbReference>
<dbReference type="InterPro" id="IPR023574">
    <property type="entry name" value="Ribosomal_uL4_dom_sf"/>
</dbReference>
<dbReference type="NCBIfam" id="TIGR03953">
    <property type="entry name" value="rplD_bact"/>
    <property type="match status" value="1"/>
</dbReference>
<dbReference type="PANTHER" id="PTHR10746">
    <property type="entry name" value="50S RIBOSOMAL PROTEIN L4"/>
    <property type="match status" value="1"/>
</dbReference>
<dbReference type="PANTHER" id="PTHR10746:SF6">
    <property type="entry name" value="LARGE RIBOSOMAL SUBUNIT PROTEIN UL4M"/>
    <property type="match status" value="1"/>
</dbReference>
<dbReference type="Pfam" id="PF00573">
    <property type="entry name" value="Ribosomal_L4"/>
    <property type="match status" value="1"/>
</dbReference>
<dbReference type="SUPFAM" id="SSF52166">
    <property type="entry name" value="Ribosomal protein L4"/>
    <property type="match status" value="1"/>
</dbReference>
<feature type="chain" id="PRO_1000142174" description="Large ribosomal subunit protein uL4">
    <location>
        <begin position="1"/>
        <end position="206"/>
    </location>
</feature>
<feature type="region of interest" description="Disordered" evidence="2">
    <location>
        <begin position="63"/>
        <end position="97"/>
    </location>
</feature>
<feature type="compositionally biased region" description="Basic residues" evidence="2">
    <location>
        <begin position="64"/>
        <end position="77"/>
    </location>
</feature>
<accession>B3PWS2</accession>
<comment type="function">
    <text evidence="1">One of the primary rRNA binding proteins, this protein initially binds near the 5'-end of the 23S rRNA. It is important during the early stages of 50S assembly. It makes multiple contacts with different domains of the 23S rRNA in the assembled 50S subunit and ribosome.</text>
</comment>
<comment type="function">
    <text evidence="1">Forms part of the polypeptide exit tunnel.</text>
</comment>
<comment type="subunit">
    <text evidence="1">Part of the 50S ribosomal subunit.</text>
</comment>
<comment type="similarity">
    <text evidence="1">Belongs to the universal ribosomal protein uL4 family.</text>
</comment>
<reference key="1">
    <citation type="journal article" date="2010" name="Appl. Environ. Microbiol.">
        <title>Conserved symbiotic plasmid DNA sequences in the multireplicon pangenomic structure of Rhizobium etli.</title>
        <authorList>
            <person name="Gonzalez V."/>
            <person name="Acosta J.L."/>
            <person name="Santamaria R.I."/>
            <person name="Bustos P."/>
            <person name="Fernandez J.L."/>
            <person name="Hernandez Gonzalez I.L."/>
            <person name="Diaz R."/>
            <person name="Flores M."/>
            <person name="Palacios R."/>
            <person name="Mora J."/>
            <person name="Davila G."/>
        </authorList>
    </citation>
    <scope>NUCLEOTIDE SEQUENCE [LARGE SCALE GENOMIC DNA]</scope>
    <source>
        <strain>CIAT 652</strain>
    </source>
</reference>
<sequence>MELNVKTLEGKDAGKVSLSDAIFGLEPREDILARVIRWQLAKKQQGTHKAKGRAEVSRTGAKMYKQKGTGRARHHSARAPQFRGGGKAHGPVVRSHEHDLPKKVRALGLRHALSAKIKADDVIVIDNLVATEAKTKALASAFETLGLTNALFIGGAELDGNFKLAAQNIPNIDVLPIQGINVYDIVRRGKLVLSKAAVEALEERFK</sequence>
<evidence type="ECO:0000255" key="1">
    <source>
        <dbReference type="HAMAP-Rule" id="MF_01328"/>
    </source>
</evidence>
<evidence type="ECO:0000256" key="2">
    <source>
        <dbReference type="SAM" id="MobiDB-lite"/>
    </source>
</evidence>
<evidence type="ECO:0000305" key="3"/>
<organism>
    <name type="scientific">Rhizobium etli (strain CIAT 652)</name>
    <dbReference type="NCBI Taxonomy" id="491916"/>
    <lineage>
        <taxon>Bacteria</taxon>
        <taxon>Pseudomonadati</taxon>
        <taxon>Pseudomonadota</taxon>
        <taxon>Alphaproteobacteria</taxon>
        <taxon>Hyphomicrobiales</taxon>
        <taxon>Rhizobiaceae</taxon>
        <taxon>Rhizobium/Agrobacterium group</taxon>
        <taxon>Rhizobium</taxon>
    </lineage>
</organism>
<name>RL4_RHIE6</name>
<gene>
    <name evidence="1" type="primary">rplD</name>
    <name type="ordered locus">RHECIAT_CH0001750</name>
</gene>
<proteinExistence type="inferred from homology"/>